<accession>P11075</accession>
<accession>D6VSF1</accession>
<accession>Q03960</accession>
<accession>Q04139</accession>
<sequence length="2009" mass="226886">MSEQNSVVNAEKGDGEISSNVETASSVNPSVKPQNAIKEEAKETNGEDQKCKGPENAGSTAETKETSNDATNGMKTPEETEDTNDKRHDDEGEDGDEDEDEDEDEDEDNGDEDDEDVDSSSSETSSEDGEDSESVSGESTESSSGEDEESDESDGNTSNSSSGDESGSEEEEEEEEEEEEEENAGEPAIAHQDSVPTNDSTAPRSTHTRNISLSSNGSNTNSTIILVKTTLETILNDKDIKKNSNAQKAIERTLQKFKEFDPQTTNNPHYVDSILVFEALRASCRTKSSKVQSLALDCLSKLFSFRSLDETLLVNPPDSLASNDQRQDAADGITPPPKQKIIDAAIDTISDCFQGEGTDDRVELQIVRALSSCILEEDSSSLCHGASLLKAIRTIYNVFVFSLNPSNQGIAQATLTQIISSVYDKIDLKQSTSSAVSLSTKNHQQQSAIELSEASENAETPAPLTLENMDKLNDDEERLMDAQQPDSIAITNQDLAVKDAFLVFRVMAKICAKPLETELDMRSHAVRSKLLSLHIIYSIIKDHIDVFLSHNIFLPGKERVCFIDSIRQYLRLVLSRNAASPLAPVFEVTLEIMWLLIANLRADFVKEIPVFLTEIYFPISELTTSTSQQKRYFLSVIQRICNDPRTLVEFYLNYDCNPGMPNVMEITVDYLTRLALTRVEITQTQRSYYDEQISKSLSTYNFSQLPLLTSSNLSSSPDVGQVNLLFPLDFALKMVSLNCIVSVLRSLSSWAHKALNPNTHTANKVLLNTTSSARQESRSSLSNDVRSSIMTSNDDFKPTYEDEESRSLSSQNIDADDPTQFENLKLRKTALSECIAIFNNKPKKAIPVLIKKGFLKDDSPISIAKWLLETEGLDMAAVGDYLGEGDDKNIAIMHAFVDEFDFTGMSIVDALRSFLQSFRLPGEGQKIDRFMLKFAERFVDQNPGVFSKADTAYVLSYSLIMLNTDLHSSQIKNKMSLQEFLENNEGIDNGRDLPRDFLEGLFNEIANNEIKLISEQHQAMLSGDTNLVQQQQSAFNFFNSRDLTREAYNQVSKEISSKTELVFKNLNKNKGGPDVYYAASHVEHVKSIFETLWMSFLAALTPPFKDYDDIDTTNKCLEGLKISIKIASTFRINDARTSFVGALVQFCNLQNLEEIKVKNVNAMVILLEVALSEGNYLEGSWKDILLVVSQMERLQLISKGIDRDTVPDVAQARVANPRVSYESSRSNNTSFFDVWGKKATPTELAQEKHHNQTLSPEISKFISSSELVVLMDNIFTKSSELSGNAIVDFIKALTAVSLEEIESSENASTPRMFSLQKMVDVCYYNMDRIKLEWTPLWAVMGKAFNKIATNSNLAVVFFAIDSLRQLSMRFLDIEELSGFEFQHDFLKPFEYTVQNSGNTEVQEMIIECFRNFILTKSESIKSGWKPILESLQYTARSSTESIVLKTQLLVSNDIVTNHFENVFSQEDAFSELVGVFREITKNKRFQKLSLHALESLRKMTQNVADICFYNENKTEEERKHNDALLRGKDIFQDVWFPMLFCFNDTIMTAEDLEVRSRALNYMFDALVAYGGKFNDDFWEKICKKLLFPIFGVLSKHWEVNQFNSHDDLSVWLSTTLIQALRNLIALFTHYFESLNRMLDGFLGLLVSCICQENDTIARIGRSCLQQLILQNVSKFNEYHWNQIGDVFDKLFDLTTANELFDYDPLQQGRKSSVSHHQTTNDTSQHSDDDSNDRRENDSNISETVERAHQEESSEDVGGDMVETLNGQTKLNNGNSVPTVKDELNPKPASLSIPKKTKHMKRNESNEDIRRRINIKNSIVVKCVLQLLMIELLNELFENEDFAHCIPYKEAIRITRLLEKSYEFSRDFNEDYGLRTRLVEARVVDKIPNLLKQETSAAAVLLDIMFQLYLNDDEKKADLITRLITICIQVVEGYVSLDDRTMERSINAWRSVIVEILQGYYEFDDEDFRLYCPAMYALVIQILDKSVPTELRHAIKQFLSRVGELYLSTD</sequence>
<feature type="chain" id="PRO_0000120214" description="ADP-ribosylation factor guanine nucleotide-exchange factor SEC7">
    <location>
        <begin position="1"/>
        <end position="2009"/>
    </location>
</feature>
<feature type="domain" description="SEC7" evidence="1">
    <location>
        <begin position="824"/>
        <end position="1010"/>
    </location>
</feature>
<feature type="region of interest" description="Disordered" evidence="2">
    <location>
        <begin position="1"/>
        <end position="220"/>
    </location>
</feature>
<feature type="region of interest" description="Disordered" evidence="2">
    <location>
        <begin position="771"/>
        <end position="814"/>
    </location>
</feature>
<feature type="region of interest" description="HDS1 domain" evidence="8">
    <location>
        <begin position="1017"/>
        <end position="1220"/>
    </location>
</feature>
<feature type="region of interest" description="Disordered" evidence="2">
    <location>
        <begin position="1708"/>
        <end position="1803"/>
    </location>
</feature>
<feature type="region of interest" description="C2 domain-interacting region (CIR)" evidence="6">
    <location>
        <begin position="1836"/>
        <end position="1883"/>
    </location>
</feature>
<feature type="short sequence motif" description="HUS box" evidence="13">
    <location>
        <begin position="653"/>
        <end position="657"/>
    </location>
</feature>
<feature type="compositionally biased region" description="Polar residues" evidence="2">
    <location>
        <begin position="17"/>
        <end position="33"/>
    </location>
</feature>
<feature type="compositionally biased region" description="Basic and acidic residues" evidence="2">
    <location>
        <begin position="37"/>
        <end position="53"/>
    </location>
</feature>
<feature type="compositionally biased region" description="Acidic residues" evidence="2">
    <location>
        <begin position="91"/>
        <end position="118"/>
    </location>
</feature>
<feature type="compositionally biased region" description="Low complexity" evidence="2">
    <location>
        <begin position="134"/>
        <end position="143"/>
    </location>
</feature>
<feature type="compositionally biased region" description="Acidic residues" evidence="2">
    <location>
        <begin position="144"/>
        <end position="154"/>
    </location>
</feature>
<feature type="compositionally biased region" description="Low complexity" evidence="2">
    <location>
        <begin position="155"/>
        <end position="165"/>
    </location>
</feature>
<feature type="compositionally biased region" description="Acidic residues" evidence="2">
    <location>
        <begin position="166"/>
        <end position="184"/>
    </location>
</feature>
<feature type="compositionally biased region" description="Polar residues" evidence="2">
    <location>
        <begin position="194"/>
        <end position="209"/>
    </location>
</feature>
<feature type="compositionally biased region" description="Low complexity" evidence="2">
    <location>
        <begin position="210"/>
        <end position="220"/>
    </location>
</feature>
<feature type="compositionally biased region" description="Low complexity" evidence="2">
    <location>
        <begin position="771"/>
        <end position="788"/>
    </location>
</feature>
<feature type="compositionally biased region" description="Polar residues" evidence="2">
    <location>
        <begin position="1708"/>
        <end position="1723"/>
    </location>
</feature>
<feature type="compositionally biased region" description="Basic and acidic residues" evidence="2">
    <location>
        <begin position="1724"/>
        <end position="1751"/>
    </location>
</feature>
<feature type="compositionally biased region" description="Polar residues" evidence="2">
    <location>
        <begin position="1764"/>
        <end position="1777"/>
    </location>
</feature>
<feature type="binding site" evidence="20">
    <location>
        <position position="940"/>
    </location>
    <ligand>
        <name>Mg(2+)</name>
        <dbReference type="ChEBI" id="CHEBI:18420"/>
    </ligand>
</feature>
<feature type="modified residue" description="Phosphoserine" evidence="21 22 24">
    <location>
        <position position="212"/>
    </location>
</feature>
<feature type="modified residue" description="Phosphoserine" evidence="22">
    <location>
        <position position="215"/>
    </location>
</feature>
<feature type="modified residue" description="Phosphothreonine" evidence="23">
    <location>
        <position position="334"/>
    </location>
</feature>
<feature type="modified residue" description="Phosphoserine" evidence="23 24">
    <location>
        <position position="447"/>
    </location>
</feature>
<feature type="modified residue" description="Phosphoserine" evidence="24">
    <location>
        <position position="452"/>
    </location>
</feature>
<feature type="modified residue" description="Phosphoserine" evidence="24">
    <location>
        <position position="455"/>
    </location>
</feature>
<feature type="modified residue" description="Phosphoserine" evidence="22">
    <location>
        <position position="807"/>
    </location>
</feature>
<feature type="modified residue" description="Phosphoserine" evidence="22 23 24">
    <location>
        <position position="1226"/>
    </location>
</feature>
<feature type="modified residue" description="Phosphothreonine" evidence="22 24">
    <location>
        <position position="1240"/>
    </location>
</feature>
<feature type="modified residue" description="Phosphoserine" evidence="24">
    <location>
        <position position="1741"/>
    </location>
</feature>
<feature type="modified residue" description="Phosphoserine" evidence="24">
    <location>
        <position position="1752"/>
    </location>
</feature>
<feature type="cross-link" description="Glycyl lysine isopeptide (Lys-Gly) (interchain with G-Cter in ubiquitin)" evidence="25">
    <location>
        <position position="797"/>
    </location>
</feature>
<feature type="mutagenesis site" description="Prevents stimulation by YPT31 and leads to lethality when ARF1 is absent." evidence="13">
    <original>N</original>
    <variation>A</variation>
    <location>
        <position position="653"/>
    </location>
</feature>
<feature type="mutagenesis site" description="Leads to lethality when ARF1 is absent." evidence="13">
    <original>D</original>
    <variation>A</variation>
    <location>
        <position position="655"/>
    </location>
</feature>
<feature type="sequence conflict" description="In Ref. 1; AAB04031." evidence="19" ref="1">
    <original>A</original>
    <variation>S</variation>
    <location>
        <position position="188"/>
    </location>
</feature>
<feature type="sequence conflict" description="In Ref. 1; AAB04031." evidence="19" ref="1">
    <original>FV</original>
    <variation>LL</variation>
    <location>
        <begin position="399"/>
        <end position="400"/>
    </location>
</feature>
<feature type="sequence conflict" description="In Ref. 1; AAB04031." evidence="19" ref="1">
    <original>S</original>
    <variation>C</variation>
    <location>
        <position position="402"/>
    </location>
</feature>
<feature type="sequence conflict" description="In Ref. 1; AAB04031." evidence="19" ref="1">
    <original>QQSA</original>
    <variation>PAIC</variation>
    <location>
        <begin position="1031"/>
        <end position="1034"/>
    </location>
</feature>
<feature type="sequence conflict" description="In Ref. 1; AAB04031." evidence="19" ref="1">
    <original>NF</original>
    <variation>QL</variation>
    <location>
        <begin position="1036"/>
        <end position="1037"/>
    </location>
</feature>
<feature type="helix" evidence="26">
    <location>
        <begin position="830"/>
        <end position="840"/>
    </location>
</feature>
<feature type="helix" evidence="26">
    <location>
        <begin position="842"/>
        <end position="851"/>
    </location>
</feature>
<feature type="strand" evidence="26">
    <location>
        <begin position="854"/>
        <end position="856"/>
    </location>
</feature>
<feature type="helix" evidence="26">
    <location>
        <begin position="860"/>
        <end position="869"/>
    </location>
</feature>
<feature type="helix" evidence="26">
    <location>
        <begin position="875"/>
        <end position="883"/>
    </location>
</feature>
<feature type="helix" evidence="26">
    <location>
        <begin position="887"/>
        <end position="898"/>
    </location>
</feature>
<feature type="helix" evidence="26">
    <location>
        <begin position="907"/>
        <end position="915"/>
    </location>
</feature>
<feature type="helix" evidence="26">
    <location>
        <begin position="924"/>
        <end position="941"/>
    </location>
</feature>
<feature type="helix" evidence="26">
    <location>
        <begin position="949"/>
        <end position="967"/>
    </location>
</feature>
<feature type="strand" evidence="26">
    <location>
        <begin position="970"/>
        <end position="972"/>
    </location>
</feature>
<feature type="helix" evidence="26">
    <location>
        <begin position="977"/>
        <end position="983"/>
    </location>
</feature>
<feature type="turn" evidence="26">
    <location>
        <begin position="984"/>
        <end position="987"/>
    </location>
</feature>
<feature type="helix" evidence="26">
    <location>
        <begin position="995"/>
        <end position="1007"/>
    </location>
</feature>
<organism>
    <name type="scientific">Saccharomyces cerevisiae (strain ATCC 204508 / S288c)</name>
    <name type="common">Baker's yeast</name>
    <dbReference type="NCBI Taxonomy" id="559292"/>
    <lineage>
        <taxon>Eukaryota</taxon>
        <taxon>Fungi</taxon>
        <taxon>Dikarya</taxon>
        <taxon>Ascomycota</taxon>
        <taxon>Saccharomycotina</taxon>
        <taxon>Saccharomycetes</taxon>
        <taxon>Saccharomycetales</taxon>
        <taxon>Saccharomycetaceae</taxon>
        <taxon>Saccharomyces</taxon>
    </lineage>
</organism>
<name>SEC7_YEAST</name>
<reference key="1">
    <citation type="journal article" date="1988" name="J. Biol. Chem.">
        <title>SEC7 encodes an unusual, high molecular weight protein required for membrane traffic from the yeast Golgi apparatus.</title>
        <authorList>
            <person name="Achstetter T."/>
            <person name="Franzusoff A."/>
            <person name="Field C."/>
            <person name="Schekman R."/>
        </authorList>
    </citation>
    <scope>NUCLEOTIDE SEQUENCE [GENOMIC DNA]</scope>
    <scope>FUNCTION</scope>
</reference>
<reference key="2">
    <citation type="journal article" date="1997" name="Nature">
        <title>The nucleotide sequence of Saccharomyces cerevisiae chromosome IV.</title>
        <authorList>
            <person name="Jacq C."/>
            <person name="Alt-Moerbe J."/>
            <person name="Andre B."/>
            <person name="Arnold W."/>
            <person name="Bahr A."/>
            <person name="Ballesta J.P.G."/>
            <person name="Bargues M."/>
            <person name="Baron L."/>
            <person name="Becker A."/>
            <person name="Biteau N."/>
            <person name="Bloecker H."/>
            <person name="Blugeon C."/>
            <person name="Boskovic J."/>
            <person name="Brandt P."/>
            <person name="Brueckner M."/>
            <person name="Buitrago M.J."/>
            <person name="Coster F."/>
            <person name="Delaveau T."/>
            <person name="del Rey F."/>
            <person name="Dujon B."/>
            <person name="Eide L.G."/>
            <person name="Garcia-Cantalejo J.M."/>
            <person name="Goffeau A."/>
            <person name="Gomez-Peris A."/>
            <person name="Granotier C."/>
            <person name="Hanemann V."/>
            <person name="Hankeln T."/>
            <person name="Hoheisel J.D."/>
            <person name="Jaeger W."/>
            <person name="Jimenez A."/>
            <person name="Jonniaux J.-L."/>
            <person name="Kraemer C."/>
            <person name="Kuester H."/>
            <person name="Laamanen P."/>
            <person name="Legros Y."/>
            <person name="Louis E.J."/>
            <person name="Moeller-Rieker S."/>
            <person name="Monnet A."/>
            <person name="Moro M."/>
            <person name="Mueller-Auer S."/>
            <person name="Nussbaumer B."/>
            <person name="Paricio N."/>
            <person name="Paulin L."/>
            <person name="Perea J."/>
            <person name="Perez-Alonso M."/>
            <person name="Perez-Ortin J.E."/>
            <person name="Pohl T.M."/>
            <person name="Prydz H."/>
            <person name="Purnelle B."/>
            <person name="Rasmussen S.W."/>
            <person name="Remacha M.A."/>
            <person name="Revuelta J.L."/>
            <person name="Rieger M."/>
            <person name="Salom D."/>
            <person name="Saluz H.P."/>
            <person name="Saiz J.E."/>
            <person name="Saren A.-M."/>
            <person name="Schaefer M."/>
            <person name="Scharfe M."/>
            <person name="Schmidt E.R."/>
            <person name="Schneider C."/>
            <person name="Scholler P."/>
            <person name="Schwarz S."/>
            <person name="Soler-Mira A."/>
            <person name="Urrestarazu L.A."/>
            <person name="Verhasselt P."/>
            <person name="Vissers S."/>
            <person name="Voet M."/>
            <person name="Volckaert G."/>
            <person name="Wagner G."/>
            <person name="Wambutt R."/>
            <person name="Wedler E."/>
            <person name="Wedler H."/>
            <person name="Woelfl S."/>
            <person name="Harris D.E."/>
            <person name="Bowman S."/>
            <person name="Brown D."/>
            <person name="Churcher C.M."/>
            <person name="Connor R."/>
            <person name="Dedman K."/>
            <person name="Gentles S."/>
            <person name="Hamlin N."/>
            <person name="Hunt S."/>
            <person name="Jones L."/>
            <person name="McDonald S."/>
            <person name="Murphy L.D."/>
            <person name="Niblett D."/>
            <person name="Odell C."/>
            <person name="Oliver K."/>
            <person name="Rajandream M.A."/>
            <person name="Richards C."/>
            <person name="Shore L."/>
            <person name="Walsh S.V."/>
            <person name="Barrell B.G."/>
            <person name="Dietrich F.S."/>
            <person name="Mulligan J.T."/>
            <person name="Allen E."/>
            <person name="Araujo R."/>
            <person name="Aviles E."/>
            <person name="Berno A."/>
            <person name="Carpenter J."/>
            <person name="Chen E."/>
            <person name="Cherry J.M."/>
            <person name="Chung E."/>
            <person name="Duncan M."/>
            <person name="Hunicke-Smith S."/>
            <person name="Hyman R.W."/>
            <person name="Komp C."/>
            <person name="Lashkari D."/>
            <person name="Lew H."/>
            <person name="Lin D."/>
            <person name="Mosedale D."/>
            <person name="Nakahara K."/>
            <person name="Namath A."/>
            <person name="Oefner P."/>
            <person name="Oh C."/>
            <person name="Petel F.X."/>
            <person name="Roberts D."/>
            <person name="Schramm S."/>
            <person name="Schroeder M."/>
            <person name="Shogren T."/>
            <person name="Shroff N."/>
            <person name="Winant A."/>
            <person name="Yelton M.A."/>
            <person name="Botstein D."/>
            <person name="Davis R.W."/>
            <person name="Johnston M."/>
            <person name="Andrews S."/>
            <person name="Brinkman R."/>
            <person name="Cooper J."/>
            <person name="Ding H."/>
            <person name="Du Z."/>
            <person name="Favello A."/>
            <person name="Fulton L."/>
            <person name="Gattung S."/>
            <person name="Greco T."/>
            <person name="Hallsworth K."/>
            <person name="Hawkins J."/>
            <person name="Hillier L.W."/>
            <person name="Jier M."/>
            <person name="Johnson D."/>
            <person name="Johnston L."/>
            <person name="Kirsten J."/>
            <person name="Kucaba T."/>
            <person name="Langston Y."/>
            <person name="Latreille P."/>
            <person name="Le T."/>
            <person name="Mardis E."/>
            <person name="Menezes S."/>
            <person name="Miller N."/>
            <person name="Nhan M."/>
            <person name="Pauley A."/>
            <person name="Peluso D."/>
            <person name="Rifkin L."/>
            <person name="Riles L."/>
            <person name="Taich A."/>
            <person name="Trevaskis E."/>
            <person name="Vignati D."/>
            <person name="Wilcox L."/>
            <person name="Wohldman P."/>
            <person name="Vaudin M."/>
            <person name="Wilson R."/>
            <person name="Waterston R."/>
            <person name="Albermann K."/>
            <person name="Hani J."/>
            <person name="Heumann K."/>
            <person name="Kleine K."/>
            <person name="Mewes H.-W."/>
            <person name="Zollner A."/>
            <person name="Zaccaria P."/>
        </authorList>
    </citation>
    <scope>NUCLEOTIDE SEQUENCE [LARGE SCALE GENOMIC DNA]</scope>
    <source>
        <strain>ATCC 204508 / S288c</strain>
    </source>
</reference>
<reference key="3">
    <citation type="journal article" date="2014" name="G3 (Bethesda)">
        <title>The reference genome sequence of Saccharomyces cerevisiae: Then and now.</title>
        <authorList>
            <person name="Engel S.R."/>
            <person name="Dietrich F.S."/>
            <person name="Fisk D.G."/>
            <person name="Binkley G."/>
            <person name="Balakrishnan R."/>
            <person name="Costanzo M.C."/>
            <person name="Dwight S.S."/>
            <person name="Hitz B.C."/>
            <person name="Karra K."/>
            <person name="Nash R.S."/>
            <person name="Weng S."/>
            <person name="Wong E.D."/>
            <person name="Lloyd P."/>
            <person name="Skrzypek M.S."/>
            <person name="Miyasato S.R."/>
            <person name="Simison M."/>
            <person name="Cherry J.M."/>
        </authorList>
    </citation>
    <scope>GENOME REANNOTATION</scope>
    <source>
        <strain>ATCC 204508 / S288c</strain>
    </source>
</reference>
<reference key="4">
    <citation type="journal article" date="1989" name="EMBO J.">
        <title>Functional compartments of the yeast Golgi apparatus are defined by the sec7 mutation.</title>
        <authorList>
            <person name="Franzusoff A."/>
            <person name="Schekman R."/>
        </authorList>
    </citation>
    <scope>FUNCTION</scope>
</reference>
<reference key="5">
    <citation type="journal article" date="1991" name="J. Cell Biol.">
        <title>Localization of components involved in protein transport and processing through the yeast Golgi apparatus.</title>
        <authorList>
            <person name="Franzusoff A."/>
            <person name="Redding K."/>
            <person name="Crosby J."/>
            <person name="Fuller R.S."/>
            <person name="Schekman R."/>
        </authorList>
    </citation>
    <scope>FUNCTION</scope>
    <scope>SUBCELLULAR LOCATION</scope>
    <scope>DOMAIN</scope>
</reference>
<reference key="6">
    <citation type="journal article" date="1992" name="Nature">
        <title>Immuno-isolation of Sec7p-coated transport vesicles from the yeast secretory pathway.</title>
        <authorList>
            <person name="Franzusoff A."/>
            <person name="Lauze E."/>
            <person name="Howell K.E."/>
        </authorList>
    </citation>
    <scope>FUNCTION</scope>
    <scope>SUBCELLULAR LOCATION</scope>
</reference>
<reference key="7">
    <citation type="journal article" date="1998" name="Biochem. Biophys. Res. Commun.">
        <title>An N-end rule destabilization mutant reveals pre-Golgi requirements for Sec7p in yeast membrane traffic.</title>
        <authorList>
            <person name="Wolf J."/>
            <person name="Nicks M."/>
            <person name="Deitz S."/>
            <person name="van Tuinen E."/>
            <person name="Franzusoff A."/>
        </authorList>
    </citation>
    <scope>FUNCTION</scope>
</reference>
<reference key="8">
    <citation type="journal article" date="2000" name="Traffic">
        <title>Sec7p directs the transitions required for yeast Golgi biogenesis.</title>
        <authorList>
            <person name="Deitz S.B."/>
            <person name="Rambourg A."/>
            <person name="Kepes F."/>
            <person name="Franzusoff A."/>
        </authorList>
    </citation>
    <scope>FUNCTION</scope>
    <scope>SUBCELLULAR LOCATION</scope>
</reference>
<reference key="9">
    <citation type="journal article" date="2003" name="Mol. Cell">
        <title>Assigning function to yeast proteins by integration of technologies.</title>
        <authorList>
            <person name="Hazbun T.R."/>
            <person name="Malmstroem L."/>
            <person name="Anderson S."/>
            <person name="Graczyk B.J."/>
            <person name="Fox B."/>
            <person name="Riffle M."/>
            <person name="Sundin B.A."/>
            <person name="Aranda J.D."/>
            <person name="McDonald W.H."/>
            <person name="Chiu C.-H."/>
            <person name="Snydsman B.E."/>
            <person name="Bradley P."/>
            <person name="Muller E.G.D."/>
            <person name="Fields S."/>
            <person name="Baker D."/>
            <person name="Yates J.R. III"/>
            <person name="Davis T.N."/>
        </authorList>
    </citation>
    <scope>IDENTIFICATION BY MASS SPECTROMETRY</scope>
</reference>
<reference key="10">
    <citation type="journal article" date="2003" name="Nature">
        <title>Global analysis of protein expression in yeast.</title>
        <authorList>
            <person name="Ghaemmaghami S."/>
            <person name="Huh W.-K."/>
            <person name="Bower K."/>
            <person name="Howson R.W."/>
            <person name="Belle A."/>
            <person name="Dephoure N."/>
            <person name="O'Shea E.K."/>
            <person name="Weissman J.S."/>
        </authorList>
    </citation>
    <scope>LEVEL OF PROTEIN EXPRESSION [LARGE SCALE ANALYSIS]</scope>
</reference>
<reference key="11">
    <citation type="journal article" date="2005" name="Mol. Cell. Proteomics">
        <title>Quantitative phosphoproteomics applied to the yeast pheromone signaling pathway.</title>
        <authorList>
            <person name="Gruhler A."/>
            <person name="Olsen J.V."/>
            <person name="Mohammed S."/>
            <person name="Mortensen P."/>
            <person name="Faergeman N.J."/>
            <person name="Mann M."/>
            <person name="Jensen O.N."/>
        </authorList>
    </citation>
    <scope>PHOSPHORYLATION [LARGE SCALE ANALYSIS] AT SER-212</scope>
    <scope>IDENTIFICATION BY MASS SPECTROMETRY [LARGE SCALE ANALYSIS]</scope>
    <source>
        <strain>YAL6B</strain>
    </source>
</reference>
<reference key="12">
    <citation type="journal article" date="2007" name="J. Proteome Res.">
        <title>Large-scale phosphorylation analysis of alpha-factor-arrested Saccharomyces cerevisiae.</title>
        <authorList>
            <person name="Li X."/>
            <person name="Gerber S.A."/>
            <person name="Rudner A.D."/>
            <person name="Beausoleil S.A."/>
            <person name="Haas W."/>
            <person name="Villen J."/>
            <person name="Elias J.E."/>
            <person name="Gygi S.P."/>
        </authorList>
    </citation>
    <scope>PHOSPHORYLATION [LARGE SCALE ANALYSIS] AT SER-212; SER-215; SER-807; SER-1226 AND THR-1240</scope>
    <scope>IDENTIFICATION BY MASS SPECTROMETRY [LARGE SCALE ANALYSIS]</scope>
    <source>
        <strain>ADR376</strain>
    </source>
</reference>
<reference key="13">
    <citation type="journal article" date="2008" name="J. Biol. Chem.">
        <title>A C-terminal sequence in the guanine nucleotide exchange factor Sec7 mediates Golgi association and interaction with the Rsp5 ubiquitin ligase.</title>
        <authorList>
            <person name="Dehring D.A."/>
            <person name="Adler A.S."/>
            <person name="Hosseini A."/>
            <person name="Hicke L."/>
        </authorList>
    </citation>
    <scope>FUNCTION</scope>
    <scope>DOMAIN</scope>
    <scope>INTERACTION WITH RSP5</scope>
    <scope>SUBCELLULAR LOCATION</scope>
</reference>
<reference key="14">
    <citation type="journal article" date="2008" name="Mol. Cell. Proteomics">
        <title>A multidimensional chromatography technology for in-depth phosphoproteome analysis.</title>
        <authorList>
            <person name="Albuquerque C.P."/>
            <person name="Smolka M.B."/>
            <person name="Payne S.H."/>
            <person name="Bafna V."/>
            <person name="Eng J."/>
            <person name="Zhou H."/>
        </authorList>
    </citation>
    <scope>PHOSPHORYLATION [LARGE SCALE ANALYSIS] AT THR-334; SER-447 AND SER-1226</scope>
    <scope>IDENTIFICATION BY MASS SPECTROMETRY [LARGE SCALE ANALYSIS]</scope>
</reference>
<reference key="15">
    <citation type="journal article" date="2009" name="Science">
        <title>Global analysis of Cdk1 substrate phosphorylation sites provides insights into evolution.</title>
        <authorList>
            <person name="Holt L.J."/>
            <person name="Tuch B.B."/>
            <person name="Villen J."/>
            <person name="Johnson A.D."/>
            <person name="Gygi S.P."/>
            <person name="Morgan D.O."/>
        </authorList>
    </citation>
    <scope>PHOSPHORYLATION [LARGE SCALE ANALYSIS] AT SER-212; SER-447; SER-452; SER-455; SER-1226; THR-1240; SER-1741 AND SER-1752</scope>
    <scope>IDENTIFICATION BY MASS SPECTROMETRY [LARGE SCALE ANALYSIS]</scope>
</reference>
<reference key="16">
    <citation type="journal article" date="2012" name="Dev. Cell">
        <title>The Sec7 Arf-GEF is recruited to the trans-Golgi network by positive feedback.</title>
        <authorList>
            <person name="Richardson B.C."/>
            <person name="McDonold C.M."/>
            <person name="Fromme J.C."/>
        </authorList>
    </citation>
    <scope>FUNCTION</scope>
    <scope>SUBCELLULAR LOCATION</scope>
    <scope>DOMAIN</scope>
    <scope>INTERACTION WITH ARF1</scope>
</reference>
<reference key="17">
    <citation type="journal article" date="2012" name="Proteomics">
        <title>Sites of ubiquitin attachment in Saccharomyces cerevisiae.</title>
        <authorList>
            <person name="Starita L.M."/>
            <person name="Lo R.S."/>
            <person name="Eng J.K."/>
            <person name="von Haller P.D."/>
            <person name="Fields S."/>
        </authorList>
    </citation>
    <scope>UBIQUITINATION [LARGE SCALE ANALYSIS] AT LYS-797</scope>
    <scope>IDENTIFICATION BY MASS SPECTROMETRY [LARGE SCALE ANALYSIS]</scope>
</reference>
<reference key="18">
    <citation type="journal article" date="2014" name="Dev. Cell">
        <title>Four GTPases differentially regulate the Sec7 Arf-GEF to direct traffic at the trans-golgi network.</title>
        <authorList>
            <person name="McDonold C.M."/>
            <person name="Fromme J.C."/>
        </authorList>
    </citation>
    <scope>FUNCTION</scope>
</reference>
<reference key="19">
    <citation type="journal article" date="2015" name="Methods Cell Biol.">
        <title>Biochemical methods for studying kinetic regulation of Arf1 activation by Sec7.</title>
        <authorList>
            <person name="Richardson B.C."/>
            <person name="Fromme J.C."/>
        </authorList>
    </citation>
    <scope>FUNCTION</scope>
</reference>
<reference key="20">
    <citation type="journal article" date="2018" name="J. Biol. Chem.">
        <title>The HUS box is required for allosteric regulation of the Sec7 Arf-GEF.</title>
        <authorList>
            <person name="Halaby S.L."/>
            <person name="Fromme J.C."/>
        </authorList>
    </citation>
    <scope>FUNCTION</scope>
    <scope>DOMAIN</scope>
    <scope>MUTAGENESIS OF ASN-653 AND ASP-655</scope>
</reference>
<reference evidence="20" key="21">
    <citation type="journal article" date="2014" name="Biochem. Biophys. Res. Commun.">
        <title>C-terminal motif within Sec7 domain regulates guanine nucleotide exchange activity via tuning protein conformation.</title>
        <authorList>
            <person name="Qiu B."/>
            <person name="Zhang K."/>
            <person name="Wang S."/>
            <person name="Sun F."/>
        </authorList>
    </citation>
    <scope>X-RAY CRYSTALLOGRAPHY (1.50 ANGSTROMS) OF 824-1010 IN COMPLEX WITH MG(2+)</scope>
    <scope>FUNCTION</scope>
</reference>
<comment type="function">
    <text evidence="3 5 7 8 9 10 11 12 13 14 15">Guanine exchange factor that acts as an activator of ARF1 at the trans-Golgi network and is thus involved in vesicular budding and traffic between compartments of the Golgi apparatus (PubMed:11208097, PubMed:1729652, PubMed:1986005, PubMed:22516198, PubMed:24613384, PubMed:26360031, PubMed:2684655, PubMed:29514977, PubMed:3042778). Activation of Arf (ADP-ribosylation factor) GTPases is essential for vesicle formation via recruitment of cargo adapters and coat proteins necessary for Golgi trafficking (PubMed:26360031). Also plays an essential role in ER-to-Golgi traffic (PubMed:9473503). SEC7 also acts as an effector of two Rab GTPases, YPT1 and YPT31/32 (PubMed:25220393).</text>
</comment>
<comment type="subunit">
    <text evidence="6 8">Interacts with ARF1 (PubMed:22516198). Interacts (via C-terminus) with RSP5 ubiquitin ligase (PubMed:18832381).</text>
</comment>
<comment type="subcellular location">
    <subcellularLocation>
        <location evidence="7">Cytoplasm</location>
    </subcellularLocation>
    <subcellularLocation>
        <location evidence="6 7">Golgi apparatus</location>
    </subcellularLocation>
    <subcellularLocation>
        <location evidence="8">Golgi apparatus</location>
        <location evidence="8">trans-Golgi network</location>
    </subcellularLocation>
    <subcellularLocation>
        <location evidence="3 5">Cytoplasmic vesicle</location>
        <location evidence="3 5">COPI-coated vesicle membrane</location>
    </subcellularLocation>
    <subcellularLocation>
        <location evidence="3 5">Cytoplasmic vesicle</location>
        <location evidence="3 5">COPII-coated vesicle membrane</location>
    </subcellularLocation>
    <text evidence="8">Recruited to the trans-Golgi network by positive feedback via its HDS1 domain by interaction with activated ARF1.</text>
</comment>
<comment type="domain">
    <text evidence="7">The highly charged acidic domain may serve a structural role to interact with lipids or proteins on the cytoplasmic surface of the Golgi apparatus.</text>
</comment>
<comment type="domain">
    <text evidence="13">The homology upstream of Sec7 (HUS) box is necessary for the allosteric activation of SEC7 by YPT31.</text>
</comment>
<comment type="domain">
    <text evidence="8">The homology downstream of Sec7 (HDS) domain 1 is required for recruitment to the trans-Golgi network via its interaction with activated ARF1.</text>
</comment>
<comment type="domain">
    <text evidence="6">A 50-amino acid region near the C-terminus called the as the C2 domain-interacting region (CIR) is required for RSP5-binding and for normal SEC7 localization.</text>
</comment>
<comment type="miscellaneous">
    <text evidence="4">Present with 3670 molecules/cell in log phase SD medium.</text>
</comment>
<dbReference type="EMBL" id="J03918">
    <property type="protein sequence ID" value="AAB04031.1"/>
    <property type="molecule type" value="Genomic_DNA"/>
</dbReference>
<dbReference type="EMBL" id="Z46727">
    <property type="protein sequence ID" value="CAA86696.1"/>
    <property type="molecule type" value="Genomic_DNA"/>
</dbReference>
<dbReference type="EMBL" id="Z47813">
    <property type="protein sequence ID" value="CAA87801.1"/>
    <property type="molecule type" value="Genomic_DNA"/>
</dbReference>
<dbReference type="EMBL" id="BK006938">
    <property type="protein sequence ID" value="DAA12011.1"/>
    <property type="molecule type" value="Genomic_DNA"/>
</dbReference>
<dbReference type="PIR" id="S49764">
    <property type="entry name" value="S49764"/>
</dbReference>
<dbReference type="RefSeq" id="NP_010454.3">
    <property type="nucleotide sequence ID" value="NM_001180477.3"/>
</dbReference>
<dbReference type="PDB" id="4OIY">
    <property type="method" value="X-ray"/>
    <property type="resolution" value="1.50 A"/>
    <property type="chains" value="A/B=824-1010"/>
</dbReference>
<dbReference type="PDBsum" id="4OIY"/>
<dbReference type="SMR" id="P11075"/>
<dbReference type="BioGRID" id="32221">
    <property type="interactions" value="304"/>
</dbReference>
<dbReference type="DIP" id="DIP-830N"/>
<dbReference type="FunCoup" id="P11075">
    <property type="interactions" value="1254"/>
</dbReference>
<dbReference type="IntAct" id="P11075">
    <property type="interactions" value="61"/>
</dbReference>
<dbReference type="MINT" id="P11075"/>
<dbReference type="STRING" id="4932.YDR170C"/>
<dbReference type="CarbonylDB" id="P11075"/>
<dbReference type="iPTMnet" id="P11075"/>
<dbReference type="PaxDb" id="4932-YDR170C"/>
<dbReference type="PeptideAtlas" id="P11075"/>
<dbReference type="EnsemblFungi" id="YDR170C_mRNA">
    <property type="protein sequence ID" value="YDR170C"/>
    <property type="gene ID" value="YDR170C"/>
</dbReference>
<dbReference type="GeneID" id="851748"/>
<dbReference type="KEGG" id="sce:YDR170C"/>
<dbReference type="AGR" id="SGD:S000002577"/>
<dbReference type="SGD" id="S000002577">
    <property type="gene designation" value="SEC7"/>
</dbReference>
<dbReference type="VEuPathDB" id="FungiDB:YDR170C"/>
<dbReference type="eggNOG" id="KOG0929">
    <property type="taxonomic scope" value="Eukaryota"/>
</dbReference>
<dbReference type="HOGENOM" id="CLU_000691_1_1_1"/>
<dbReference type="InParanoid" id="P11075"/>
<dbReference type="OMA" id="EVMCAYI"/>
<dbReference type="OrthoDB" id="18431at2759"/>
<dbReference type="BioCyc" id="YEAST:G3O-29759-MONOMER"/>
<dbReference type="Reactome" id="R-SCE-6811438">
    <property type="pathway name" value="Intra-Golgi traffic"/>
</dbReference>
<dbReference type="BioGRID-ORCS" id="851748">
    <property type="hits" value="1 hit in 10 CRISPR screens"/>
</dbReference>
<dbReference type="EvolutionaryTrace" id="P11075"/>
<dbReference type="PRO" id="PR:P11075"/>
<dbReference type="Proteomes" id="UP000002311">
    <property type="component" value="Chromosome IV"/>
</dbReference>
<dbReference type="RNAct" id="P11075">
    <property type="molecule type" value="protein"/>
</dbReference>
<dbReference type="GO" id="GO:0030663">
    <property type="term" value="C:COPI-coated vesicle membrane"/>
    <property type="evidence" value="ECO:0007669"/>
    <property type="project" value="UniProtKB-SubCell"/>
</dbReference>
<dbReference type="GO" id="GO:0005829">
    <property type="term" value="C:cytosol"/>
    <property type="evidence" value="ECO:0000314"/>
    <property type="project" value="SGD"/>
</dbReference>
<dbReference type="GO" id="GO:0012507">
    <property type="term" value="C:ER to Golgi transport vesicle membrane"/>
    <property type="evidence" value="ECO:0007669"/>
    <property type="project" value="UniProtKB-SubCell"/>
</dbReference>
<dbReference type="GO" id="GO:0005798">
    <property type="term" value="C:Golgi-associated vesicle"/>
    <property type="evidence" value="ECO:0000314"/>
    <property type="project" value="SGD"/>
</dbReference>
<dbReference type="GO" id="GO:0005770">
    <property type="term" value="C:late endosome"/>
    <property type="evidence" value="ECO:0000314"/>
    <property type="project" value="SGD"/>
</dbReference>
<dbReference type="GO" id="GO:0005802">
    <property type="term" value="C:trans-Golgi network"/>
    <property type="evidence" value="ECO:0000314"/>
    <property type="project" value="SGD"/>
</dbReference>
<dbReference type="GO" id="GO:0005085">
    <property type="term" value="F:guanyl-nucleotide exchange factor activity"/>
    <property type="evidence" value="ECO:0000314"/>
    <property type="project" value="SGD"/>
</dbReference>
<dbReference type="GO" id="GO:0000045">
    <property type="term" value="P:autophagosome assembly"/>
    <property type="evidence" value="ECO:0000315"/>
    <property type="project" value="SGD"/>
</dbReference>
<dbReference type="GO" id="GO:0140455">
    <property type="term" value="P:cytoplasm protein quality control"/>
    <property type="evidence" value="ECO:0000315"/>
    <property type="project" value="SGD"/>
</dbReference>
<dbReference type="GO" id="GO:0006888">
    <property type="term" value="P:endoplasmic reticulum to Golgi vesicle-mediated transport"/>
    <property type="evidence" value="ECO:0000315"/>
    <property type="project" value="SGD"/>
</dbReference>
<dbReference type="GO" id="GO:0006891">
    <property type="term" value="P:intra-Golgi vesicle-mediated transport"/>
    <property type="evidence" value="ECO:0000315"/>
    <property type="project" value="SGD"/>
</dbReference>
<dbReference type="GO" id="GO:0015031">
    <property type="term" value="P:protein transport"/>
    <property type="evidence" value="ECO:0007669"/>
    <property type="project" value="UniProtKB-KW"/>
</dbReference>
<dbReference type="GO" id="GO:0032012">
    <property type="term" value="P:regulation of ARF protein signal transduction"/>
    <property type="evidence" value="ECO:0007669"/>
    <property type="project" value="InterPro"/>
</dbReference>
<dbReference type="CDD" id="cd00171">
    <property type="entry name" value="Sec7"/>
    <property type="match status" value="1"/>
</dbReference>
<dbReference type="FunFam" id="1.10.1000.11:FF:000003">
    <property type="entry name" value="Brefeldin A-inhibited guanine nucleotide-exchange protein 1"/>
    <property type="match status" value="1"/>
</dbReference>
<dbReference type="FunFam" id="1.10.220.20:FF:000002">
    <property type="entry name" value="Brefeldin A-inhibited guanine nucleotide-exchange protein 1"/>
    <property type="match status" value="1"/>
</dbReference>
<dbReference type="Gene3D" id="1.10.220.20">
    <property type="match status" value="1"/>
</dbReference>
<dbReference type="Gene3D" id="1.10.1000.11">
    <property type="entry name" value="Arf Nucleotide-binding Site Opener,domain 2"/>
    <property type="match status" value="1"/>
</dbReference>
<dbReference type="InterPro" id="IPR016024">
    <property type="entry name" value="ARM-type_fold"/>
</dbReference>
<dbReference type="InterPro" id="IPR032629">
    <property type="entry name" value="DCB_dom"/>
</dbReference>
<dbReference type="InterPro" id="IPR015403">
    <property type="entry name" value="Mon2/Sec7/BIG1-like_HDS"/>
</dbReference>
<dbReference type="InterPro" id="IPR032691">
    <property type="entry name" value="Mon2/Sec7/BIG1-like_HUS"/>
</dbReference>
<dbReference type="InterPro" id="IPR046455">
    <property type="entry name" value="Sec7/BIG1-like_C"/>
</dbReference>
<dbReference type="InterPro" id="IPR023394">
    <property type="entry name" value="Sec7_C_sf"/>
</dbReference>
<dbReference type="InterPro" id="IPR000904">
    <property type="entry name" value="Sec7_dom"/>
</dbReference>
<dbReference type="InterPro" id="IPR035999">
    <property type="entry name" value="Sec7_dom_sf"/>
</dbReference>
<dbReference type="PANTHER" id="PTHR10663">
    <property type="entry name" value="GUANYL-NUCLEOTIDE EXCHANGE FACTOR"/>
    <property type="match status" value="1"/>
</dbReference>
<dbReference type="PANTHER" id="PTHR10663:SF375">
    <property type="entry name" value="LD29171P"/>
    <property type="match status" value="1"/>
</dbReference>
<dbReference type="Pfam" id="PF20252">
    <property type="entry name" value="BIG2_C"/>
    <property type="match status" value="1"/>
</dbReference>
<dbReference type="Pfam" id="PF16213">
    <property type="entry name" value="DCB"/>
    <property type="match status" value="1"/>
</dbReference>
<dbReference type="Pfam" id="PF01369">
    <property type="entry name" value="Sec7"/>
    <property type="match status" value="1"/>
</dbReference>
<dbReference type="Pfam" id="PF09324">
    <property type="entry name" value="Sec7-like_HDS"/>
    <property type="match status" value="1"/>
</dbReference>
<dbReference type="Pfam" id="PF12783">
    <property type="entry name" value="Sec7-like_HUS"/>
    <property type="match status" value="1"/>
</dbReference>
<dbReference type="SMART" id="SM00222">
    <property type="entry name" value="Sec7"/>
    <property type="match status" value="1"/>
</dbReference>
<dbReference type="SUPFAM" id="SSF48371">
    <property type="entry name" value="ARM repeat"/>
    <property type="match status" value="1"/>
</dbReference>
<dbReference type="SUPFAM" id="SSF48425">
    <property type="entry name" value="Sec7 domain"/>
    <property type="match status" value="1"/>
</dbReference>
<dbReference type="PROSITE" id="PS50190">
    <property type="entry name" value="SEC7"/>
    <property type="match status" value="1"/>
</dbReference>
<evidence type="ECO:0000255" key="1">
    <source>
        <dbReference type="PROSITE-ProRule" id="PRU00189"/>
    </source>
</evidence>
<evidence type="ECO:0000256" key="2">
    <source>
        <dbReference type="SAM" id="MobiDB-lite"/>
    </source>
</evidence>
<evidence type="ECO:0000269" key="3">
    <source>
    </source>
</evidence>
<evidence type="ECO:0000269" key="4">
    <source>
    </source>
</evidence>
<evidence type="ECO:0000269" key="5">
    <source>
    </source>
</evidence>
<evidence type="ECO:0000269" key="6">
    <source>
    </source>
</evidence>
<evidence type="ECO:0000269" key="7">
    <source>
    </source>
</evidence>
<evidence type="ECO:0000269" key="8">
    <source>
    </source>
</evidence>
<evidence type="ECO:0000269" key="9">
    <source>
    </source>
</evidence>
<evidence type="ECO:0000269" key="10">
    <source>
    </source>
</evidence>
<evidence type="ECO:0000269" key="11">
    <source>
    </source>
</evidence>
<evidence type="ECO:0000269" key="12">
    <source>
    </source>
</evidence>
<evidence type="ECO:0000269" key="13">
    <source>
    </source>
</evidence>
<evidence type="ECO:0000269" key="14">
    <source>
    </source>
</evidence>
<evidence type="ECO:0000269" key="15">
    <source>
    </source>
</evidence>
<evidence type="ECO:0000303" key="16">
    <source>
    </source>
</evidence>
<evidence type="ECO:0000303" key="17">
    <source>
    </source>
</evidence>
<evidence type="ECO:0000303" key="18">
    <source>
    </source>
</evidence>
<evidence type="ECO:0000305" key="19"/>
<evidence type="ECO:0007744" key="20">
    <source>
        <dbReference type="PDB" id="4OIY"/>
    </source>
</evidence>
<evidence type="ECO:0007744" key="21">
    <source>
    </source>
</evidence>
<evidence type="ECO:0007744" key="22">
    <source>
    </source>
</evidence>
<evidence type="ECO:0007744" key="23">
    <source>
    </source>
</evidence>
<evidence type="ECO:0007744" key="24">
    <source>
    </source>
</evidence>
<evidence type="ECO:0007744" key="25">
    <source>
    </source>
</evidence>
<evidence type="ECO:0007829" key="26">
    <source>
        <dbReference type="PDB" id="4OIY"/>
    </source>
</evidence>
<proteinExistence type="evidence at protein level"/>
<gene>
    <name evidence="18" type="primary">SEC7</name>
    <name type="ordered locus">YDR170C</name>
    <name type="ORF">YD9395.01C</name>
    <name type="ORF">YD9489.05C</name>
</gene>
<protein>
    <recommendedName>
        <fullName evidence="17">ADP-ribosylation factor guanine nucleotide-exchange factor SEC7</fullName>
        <shortName evidence="16">ARF-GEP SEC7</shortName>
    </recommendedName>
</protein>
<keyword id="KW-0002">3D-structure</keyword>
<keyword id="KW-0963">Cytoplasm</keyword>
<keyword id="KW-0968">Cytoplasmic vesicle</keyword>
<keyword id="KW-0333">Golgi apparatus</keyword>
<keyword id="KW-1017">Isopeptide bond</keyword>
<keyword id="KW-0472">Membrane</keyword>
<keyword id="KW-0597">Phosphoprotein</keyword>
<keyword id="KW-0653">Protein transport</keyword>
<keyword id="KW-1185">Reference proteome</keyword>
<keyword id="KW-0813">Transport</keyword>
<keyword id="KW-0832">Ubl conjugation</keyword>